<name>IF122_HUMAN</name>
<comment type="function">
    <text evidence="1 9 10">As a component of the IFT complex A (IFT-A), a complex required for retrograde ciliary transport and entry into cilia of G protein-coupled receptors (GPCRs), it is required in ciliogenesis and ciliary protein trafficking (PubMed:27932497, PubMed:29220510). Involved in cilia formation during neuronal patterning. Acts as a negative regulator of Shh signaling. Required to recruit TULP3 to primary cilia (By similarity).</text>
</comment>
<comment type="subunit">
    <text evidence="5 9 10 11">Component of the IFT complex A (IFT-A) complex (PubMed:20889716, PubMed:27932497). IFT-A complex is divided into a core subcomplex composed of IFT122:IFT140:WDR19 which is associated with TULP3 and a peripheral subcomplex composed of IFT43:WDR35:TTC21B (PubMed:27932497, PubMed:29220510). Interacts with IFT43:WDR35; the interaction connects the 2 IFT-A subcomplexes (PubMed:29220510). Interacts with IFTAP; the interaction associates IFTAP with IFT-A complex (PubMed:30476139).</text>
</comment>
<comment type="interaction">
    <interactant intactId="EBI-2805994">
        <id>Q9HBG6</id>
    </interactant>
    <interactant intactId="EBI-11903679">
        <id>Q8NEZ3</id>
        <label>WDR19</label>
    </interactant>
    <organismsDiffer>false</organismsDiffer>
    <experiments>6</experiments>
</comment>
<comment type="interaction">
    <interactant intactId="EBI-2805994">
        <id>Q9HBG6</id>
    </interactant>
    <interactant intactId="EBI-6248094">
        <id>Q9Q2G4</id>
        <label>ORF</label>
    </interactant>
    <organismsDiffer>true</organismsDiffer>
    <experiments>3</experiments>
</comment>
<comment type="interaction">
    <interactant intactId="EBI-26854447">
        <id>Q9HBG6-3</id>
    </interactant>
    <interactant intactId="EBI-2851301">
        <id>Q7Z4L5</id>
        <label>TTC21B</label>
    </interactant>
    <organismsDiffer>false</organismsDiffer>
    <experiments>2</experiments>
</comment>
<comment type="subcellular location">
    <subcellularLocation>
        <location evidence="10">Cell projection</location>
        <location evidence="10">Cilium</location>
    </subcellularLocation>
    <subcellularLocation>
        <location evidence="10">Cytoplasm</location>
        <location evidence="10">Cytoskeleton</location>
        <location evidence="10">Cilium basal body</location>
    </subcellularLocation>
    <text evidence="1">Localizes to photoreceptor connecting cilia.</text>
</comment>
<comment type="alternative products">
    <event type="alternative splicing"/>
    <isoform>
        <id>Q9HBG6-1</id>
        <name>1</name>
        <sequence type="displayed"/>
    </isoform>
    <isoform>
        <id>Q9HBG6-3</id>
        <name>3</name>
        <sequence type="described" ref="VSP_041161"/>
    </isoform>
    <isoform>
        <id>Q9HBG6-4</id>
        <name>4</name>
        <sequence type="described" ref="VSP_043310 VSP_041161 VSP_043311"/>
    </isoform>
    <isoform>
        <id>Q9HBG6-5</id>
        <name>5</name>
        <sequence type="described" ref="VSP_045224"/>
    </isoform>
    <isoform>
        <id>Q9HBG6-6</id>
        <name>6</name>
        <sequence type="described" ref="VSP_045224 VSP_041161 VSP_043311"/>
    </isoform>
    <isoform>
        <id>Q9HBG6-7</id>
        <name>7</name>
        <sequence type="described" ref="VSP_056773 VSP_041161"/>
    </isoform>
    <isoform>
        <id>Q9HBG6-8</id>
        <name>8</name>
        <sequence type="described" ref="VSP_056773"/>
    </isoform>
    <isoform>
        <id>Q9HBG6-9</id>
        <name>9</name>
        <sequence type="described" ref="VSP_056774 VSP_041161 VSP_056777 VSP_043311"/>
    </isoform>
    <isoform>
        <id>Q9HBG6-10</id>
        <name>10</name>
        <sequence type="described" ref="VSP_056775 VSP_056776 VSP_043311"/>
    </isoform>
    <isoform>
        <id>Q9HBG6-11</id>
        <name>11</name>
        <sequence type="described" ref="VSP_041161 VSP_056778"/>
    </isoform>
</comment>
<comment type="tissue specificity">
    <text evidence="3">Expressed in many tissues. Predominant expression in testis and pituitary.</text>
</comment>
<comment type="domain">
    <text evidence="10">Forms the trimeric core subcomplex IFT122:IFT140:WDR19 via the C-terminal region, whereas it interacts with IFT43:WDR35 via the N-terminal region containing the WD repeats.</text>
</comment>
<comment type="disease" evidence="4 6 7 8 10">
    <disease id="DI-02715">
        <name>Cranioectodermal dysplasia 1</name>
        <acronym>CED1</acronym>
        <description>A disorder characterized by craniofacial, skeletal and ectodermal abnormalities. Clinical features include dolichocephaly (with or without sagittal suture synostosis), scaphocephaly, short stature, limb shortening, short ribs, narrow chest, brachydactyly, renal failure and hepatic fibrosis, small and abnormally shaped teeth, sparse hair, skin laxity and abnormal nails.</description>
        <dbReference type="MIM" id="218330"/>
    </disease>
    <text>The disease is caused by variants affecting the gene represented in this entry.</text>
</comment>
<accession>Q9HBG6</accession>
<accession>B3KW53</accession>
<accession>B4DEY9</accession>
<accession>B4DPW7</accession>
<accession>E7EQF4</accession>
<accession>E9PDG2</accession>
<accession>E9PDX2</accession>
<accession>G3XAB1</accession>
<accession>H7C3C0</accession>
<accession>Q53G36</accession>
<accession>Q8TC06</accession>
<accession>Q9BTB9</accession>
<accession>Q9BTY4</accession>
<accession>Q9HAT9</accession>
<accession>Q9HBG5</accession>
<accession>Q9NV68</accession>
<accession>Q9UF80</accession>
<dbReference type="EMBL" id="AF244930">
    <property type="protein sequence ID" value="AAG15427.1"/>
    <property type="molecule type" value="mRNA"/>
</dbReference>
<dbReference type="EMBL" id="AF244931">
    <property type="protein sequence ID" value="AAG15428.1"/>
    <property type="molecule type" value="mRNA"/>
</dbReference>
<dbReference type="EMBL" id="AF302154">
    <property type="protein sequence ID" value="AAG13415.1"/>
    <property type="molecule type" value="mRNA"/>
</dbReference>
<dbReference type="EMBL" id="AK001759">
    <property type="protein sequence ID" value="BAA91888.1"/>
    <property type="molecule type" value="mRNA"/>
</dbReference>
<dbReference type="EMBL" id="AK293852">
    <property type="protein sequence ID" value="BAG57250.1"/>
    <property type="molecule type" value="mRNA"/>
</dbReference>
<dbReference type="EMBL" id="AK298526">
    <property type="protein sequence ID" value="BAG60729.1"/>
    <property type="molecule type" value="mRNA"/>
</dbReference>
<dbReference type="EMBL" id="AK124140">
    <property type="protein sequence ID" value="BAG54015.1"/>
    <property type="molecule type" value="mRNA"/>
</dbReference>
<dbReference type="EMBL" id="AK223095">
    <property type="protein sequence ID" value="BAD96815.1"/>
    <property type="molecule type" value="mRNA"/>
</dbReference>
<dbReference type="EMBL" id="AC080007">
    <property type="status" value="NOT_ANNOTATED_CDS"/>
    <property type="molecule type" value="Genomic_DNA"/>
</dbReference>
<dbReference type="EMBL" id="AL449212">
    <property type="status" value="NOT_ANNOTATED_CDS"/>
    <property type="molecule type" value="Genomic_DNA"/>
</dbReference>
<dbReference type="EMBL" id="CH471052">
    <property type="protein sequence ID" value="EAW79246.1"/>
    <property type="molecule type" value="Genomic_DNA"/>
</dbReference>
<dbReference type="EMBL" id="CH471052">
    <property type="protein sequence ID" value="EAW79247.1"/>
    <property type="molecule type" value="Genomic_DNA"/>
</dbReference>
<dbReference type="EMBL" id="CH471052">
    <property type="protein sequence ID" value="EAW79249.1"/>
    <property type="molecule type" value="Genomic_DNA"/>
</dbReference>
<dbReference type="EMBL" id="CH471052">
    <property type="protein sequence ID" value="EAW79250.1"/>
    <property type="molecule type" value="Genomic_DNA"/>
</dbReference>
<dbReference type="EMBL" id="BC028353">
    <property type="protein sequence ID" value="AAH28353.1"/>
    <property type="molecule type" value="mRNA"/>
</dbReference>
<dbReference type="EMBL" id="BC003045">
    <property type="protein sequence ID" value="AAH03045.2"/>
    <property type="molecule type" value="mRNA"/>
</dbReference>
<dbReference type="EMBL" id="BC004238">
    <property type="protein sequence ID" value="AAH04238.1"/>
    <property type="molecule type" value="mRNA"/>
</dbReference>
<dbReference type="CCDS" id="CCDS3059.1">
    <molecule id="Q9HBG6-3"/>
</dbReference>
<dbReference type="CCDS" id="CCDS3060.1">
    <molecule id="Q9HBG6-5"/>
</dbReference>
<dbReference type="CCDS" id="CCDS3061.1">
    <molecule id="Q9HBG6-1"/>
</dbReference>
<dbReference type="CCDS" id="CCDS3062.1">
    <molecule id="Q9HBG6-4"/>
</dbReference>
<dbReference type="CCDS" id="CCDS63770.1">
    <molecule id="Q9HBG6-6"/>
</dbReference>
<dbReference type="PIR" id="T43484">
    <property type="entry name" value="T43484"/>
</dbReference>
<dbReference type="RefSeq" id="NP_001267470.1">
    <molecule id="Q9HBG6-6"/>
    <property type="nucleotide sequence ID" value="NM_001280541.2"/>
</dbReference>
<dbReference type="RefSeq" id="NP_001267474.1">
    <molecule id="Q9HBG6-8"/>
    <property type="nucleotide sequence ID" value="NM_001280545.2"/>
</dbReference>
<dbReference type="RefSeq" id="NP_001267475.1">
    <molecule id="Q9HBG6-7"/>
    <property type="nucleotide sequence ID" value="NM_001280546.2"/>
</dbReference>
<dbReference type="RefSeq" id="NP_060732.2">
    <molecule id="Q9HBG6-3"/>
    <property type="nucleotide sequence ID" value="NM_018262.3"/>
</dbReference>
<dbReference type="RefSeq" id="NP_443711.2">
    <molecule id="Q9HBG6-5"/>
    <property type="nucleotide sequence ID" value="NM_052985.4"/>
</dbReference>
<dbReference type="RefSeq" id="NP_443715.1">
    <molecule id="Q9HBG6-1"/>
    <property type="nucleotide sequence ID" value="NM_052989.3"/>
</dbReference>
<dbReference type="RefSeq" id="NP_443716.1">
    <molecule id="Q9HBG6-4"/>
    <property type="nucleotide sequence ID" value="NM_052990.3"/>
</dbReference>
<dbReference type="PDB" id="8BBE">
    <property type="method" value="EM"/>
    <property type="resolution" value="3.50 A"/>
    <property type="chains" value="C=1-1241"/>
</dbReference>
<dbReference type="PDB" id="8BBF">
    <property type="method" value="EM"/>
    <property type="resolution" value="8.00 A"/>
    <property type="chains" value="C=1-1241"/>
</dbReference>
<dbReference type="PDB" id="8BBG">
    <property type="method" value="EM"/>
    <property type="resolution" value="3.50 A"/>
    <property type="chains" value="C=1-1241"/>
</dbReference>
<dbReference type="PDB" id="8FGW">
    <property type="method" value="EM"/>
    <property type="resolution" value="3.70 A"/>
    <property type="chains" value="B=1-1241"/>
</dbReference>
<dbReference type="PDB" id="8FH3">
    <property type="method" value="EM"/>
    <property type="resolution" value="4.30 A"/>
    <property type="chains" value="B=1-1241"/>
</dbReference>
<dbReference type="PDBsum" id="8BBE"/>
<dbReference type="PDBsum" id="8BBF"/>
<dbReference type="PDBsum" id="8BBG"/>
<dbReference type="PDBsum" id="8FGW"/>
<dbReference type="PDBsum" id="8FH3"/>
<dbReference type="EMDB" id="EMD-15954"/>
<dbReference type="EMDB" id="EMD-15955"/>
<dbReference type="EMDB" id="EMD-29073"/>
<dbReference type="EMDB" id="EMD-29078"/>
<dbReference type="SMR" id="Q9HBG6"/>
<dbReference type="BioGRID" id="120882">
    <property type="interactions" value="90"/>
</dbReference>
<dbReference type="ComplexPortal" id="CPX-5021">
    <property type="entry name" value="Intraflagellar transport complex A"/>
</dbReference>
<dbReference type="CORUM" id="Q9HBG6"/>
<dbReference type="FunCoup" id="Q9HBG6">
    <property type="interactions" value="922"/>
</dbReference>
<dbReference type="IntAct" id="Q9HBG6">
    <property type="interactions" value="57"/>
</dbReference>
<dbReference type="STRING" id="9606.ENSP00000296266"/>
<dbReference type="TCDB" id="1.X.1.1.1">
    <property type="family name" value="the intraflagellar transporter-a complex (ift-a) family"/>
</dbReference>
<dbReference type="iPTMnet" id="Q9HBG6"/>
<dbReference type="PhosphoSitePlus" id="Q9HBG6"/>
<dbReference type="SwissPalm" id="Q9HBG6"/>
<dbReference type="BioMuta" id="IFT122"/>
<dbReference type="DMDM" id="212276436"/>
<dbReference type="jPOST" id="Q9HBG6"/>
<dbReference type="MassIVE" id="Q9HBG6"/>
<dbReference type="PaxDb" id="9606-ENSP00000296266"/>
<dbReference type="PeptideAtlas" id="Q9HBG6"/>
<dbReference type="ProteomicsDB" id="17562"/>
<dbReference type="ProteomicsDB" id="19657"/>
<dbReference type="ProteomicsDB" id="33699"/>
<dbReference type="ProteomicsDB" id="3996"/>
<dbReference type="ProteomicsDB" id="45277"/>
<dbReference type="ProteomicsDB" id="4822"/>
<dbReference type="ProteomicsDB" id="81540">
    <molecule id="Q9HBG6-1"/>
</dbReference>
<dbReference type="ProteomicsDB" id="81542">
    <molecule id="Q9HBG6-3"/>
</dbReference>
<dbReference type="ProteomicsDB" id="81543">
    <molecule id="Q9HBG6-4"/>
</dbReference>
<dbReference type="Pumba" id="Q9HBG6"/>
<dbReference type="Antibodypedia" id="33252">
    <property type="antibodies" value="72 antibodies from 19 providers"/>
</dbReference>
<dbReference type="DNASU" id="55764"/>
<dbReference type="Ensembl" id="ENST00000296266.7">
    <molecule id="Q9HBG6-5"/>
    <property type="protein sequence ID" value="ENSP00000296266.3"/>
    <property type="gene ID" value="ENSG00000163913.14"/>
</dbReference>
<dbReference type="Ensembl" id="ENST00000347300.6">
    <molecule id="Q9HBG6-3"/>
    <property type="protein sequence ID" value="ENSP00000323973.3"/>
    <property type="gene ID" value="ENSG00000163913.14"/>
</dbReference>
<dbReference type="Ensembl" id="ENST00000348417.7">
    <molecule id="Q9HBG6-1"/>
    <property type="protein sequence ID" value="ENSP00000324005.4"/>
    <property type="gene ID" value="ENSG00000163913.14"/>
</dbReference>
<dbReference type="Ensembl" id="ENST00000349441.6">
    <molecule id="Q9HBG6-4"/>
    <property type="protein sequence ID" value="ENSP00000324165.3"/>
    <property type="gene ID" value="ENSG00000163913.14"/>
</dbReference>
<dbReference type="Ensembl" id="ENST00000507564.5">
    <molecule id="Q9HBG6-6"/>
    <property type="protein sequence ID" value="ENSP00000425536.1"/>
    <property type="gene ID" value="ENSG00000163913.14"/>
</dbReference>
<dbReference type="Ensembl" id="ENST00000689005.1">
    <molecule id="Q9HBG6-10"/>
    <property type="protein sequence ID" value="ENSP00000510168.1"/>
    <property type="gene ID" value="ENSG00000163913.14"/>
</dbReference>
<dbReference type="Ensembl" id="ENST00000693233.1">
    <molecule id="Q9HBG6-7"/>
    <property type="protein sequence ID" value="ENSP00000509186.1"/>
    <property type="gene ID" value="ENSG00000163913.14"/>
</dbReference>
<dbReference type="GeneID" id="55764"/>
<dbReference type="KEGG" id="hsa:55764"/>
<dbReference type="MANE-Select" id="ENST00000348417.7">
    <property type="protein sequence ID" value="ENSP00000324005.4"/>
    <property type="RefSeq nucleotide sequence ID" value="NM_052989.3"/>
    <property type="RefSeq protein sequence ID" value="NP_443715.1"/>
</dbReference>
<dbReference type="UCSC" id="uc003eml.5">
    <molecule id="Q9HBG6-1"/>
    <property type="organism name" value="human"/>
</dbReference>
<dbReference type="AGR" id="HGNC:13556"/>
<dbReference type="CTD" id="55764"/>
<dbReference type="DisGeNET" id="55764"/>
<dbReference type="GeneCards" id="IFT122"/>
<dbReference type="GeneReviews" id="IFT122"/>
<dbReference type="HGNC" id="HGNC:13556">
    <property type="gene designation" value="IFT122"/>
</dbReference>
<dbReference type="HPA" id="ENSG00000163913">
    <property type="expression patterns" value="Tissue enhanced (testis)"/>
</dbReference>
<dbReference type="MalaCards" id="IFT122"/>
<dbReference type="MIM" id="218330">
    <property type="type" value="phenotype"/>
</dbReference>
<dbReference type="MIM" id="606045">
    <property type="type" value="gene"/>
</dbReference>
<dbReference type="neXtProt" id="NX_Q9HBG6"/>
<dbReference type="OpenTargets" id="ENSG00000163913"/>
<dbReference type="Orphanet" id="1515">
    <property type="disease" value="Cranioectodermal dysplasia"/>
</dbReference>
<dbReference type="Orphanet" id="93268">
    <property type="disease" value="Short rib-polydactyly syndrome, Beemer-Langer type"/>
</dbReference>
<dbReference type="PharmGKB" id="PA37798"/>
<dbReference type="VEuPathDB" id="HostDB:ENSG00000163913"/>
<dbReference type="eggNOG" id="KOG1538">
    <property type="taxonomic scope" value="Eukaryota"/>
</dbReference>
<dbReference type="GeneTree" id="ENSGT00390000001016"/>
<dbReference type="HOGENOM" id="CLU_008896_0_0_1"/>
<dbReference type="InParanoid" id="Q9HBG6"/>
<dbReference type="OMA" id="GDSFDTW"/>
<dbReference type="OrthoDB" id="10255582at2759"/>
<dbReference type="PAN-GO" id="Q9HBG6">
    <property type="GO annotations" value="5 GO annotations based on evolutionary models"/>
</dbReference>
<dbReference type="PhylomeDB" id="Q9HBG6"/>
<dbReference type="TreeFam" id="TF105855"/>
<dbReference type="PathwayCommons" id="Q9HBG6"/>
<dbReference type="Reactome" id="R-HSA-5610787">
    <property type="pathway name" value="Hedgehog 'off' state"/>
</dbReference>
<dbReference type="Reactome" id="R-HSA-5620924">
    <property type="pathway name" value="Intraflagellar transport"/>
</dbReference>
<dbReference type="SignaLink" id="Q9HBG6"/>
<dbReference type="BioGRID-ORCS" id="55764">
    <property type="hits" value="11 hits in 1152 CRISPR screens"/>
</dbReference>
<dbReference type="ChiTaRS" id="IFT122">
    <property type="organism name" value="human"/>
</dbReference>
<dbReference type="GenomeRNAi" id="55764"/>
<dbReference type="Pharos" id="Q9HBG6">
    <property type="development level" value="Tbio"/>
</dbReference>
<dbReference type="PRO" id="PR:Q9HBG6"/>
<dbReference type="Proteomes" id="UP000005640">
    <property type="component" value="Chromosome 3"/>
</dbReference>
<dbReference type="RNAct" id="Q9HBG6">
    <property type="molecule type" value="protein"/>
</dbReference>
<dbReference type="Bgee" id="ENSG00000163913">
    <property type="expression patterns" value="Expressed in right testis and 166 other cell types or tissues"/>
</dbReference>
<dbReference type="ExpressionAtlas" id="Q9HBG6">
    <property type="expression patterns" value="baseline and differential"/>
</dbReference>
<dbReference type="GO" id="GO:0036064">
    <property type="term" value="C:ciliary basal body"/>
    <property type="evidence" value="ECO:0000314"/>
    <property type="project" value="UniProtKB"/>
</dbReference>
<dbReference type="GO" id="GO:0097542">
    <property type="term" value="C:ciliary tip"/>
    <property type="evidence" value="ECO:0000304"/>
    <property type="project" value="Reactome"/>
</dbReference>
<dbReference type="GO" id="GO:0005929">
    <property type="term" value="C:cilium"/>
    <property type="evidence" value="ECO:0000314"/>
    <property type="project" value="HPA"/>
</dbReference>
<dbReference type="GO" id="GO:0005829">
    <property type="term" value="C:cytosol"/>
    <property type="evidence" value="ECO:0000314"/>
    <property type="project" value="HPA"/>
</dbReference>
<dbReference type="GO" id="GO:0030991">
    <property type="term" value="C:intraciliary transport particle A"/>
    <property type="evidence" value="ECO:0000314"/>
    <property type="project" value="UniProtKB"/>
</dbReference>
<dbReference type="GO" id="GO:0016020">
    <property type="term" value="C:membrane"/>
    <property type="evidence" value="ECO:0007005"/>
    <property type="project" value="UniProtKB"/>
</dbReference>
<dbReference type="GO" id="GO:0097730">
    <property type="term" value="C:non-motile cilium"/>
    <property type="evidence" value="ECO:0000318"/>
    <property type="project" value="GO_Central"/>
</dbReference>
<dbReference type="GO" id="GO:0031965">
    <property type="term" value="C:nuclear membrane"/>
    <property type="evidence" value="ECO:0000314"/>
    <property type="project" value="HPA"/>
</dbReference>
<dbReference type="GO" id="GO:0005654">
    <property type="term" value="C:nucleoplasm"/>
    <property type="evidence" value="ECO:0000314"/>
    <property type="project" value="HPA"/>
</dbReference>
<dbReference type="GO" id="GO:0032391">
    <property type="term" value="C:photoreceptor connecting cilium"/>
    <property type="evidence" value="ECO:0000250"/>
    <property type="project" value="UniProtKB"/>
</dbReference>
<dbReference type="GO" id="GO:0048593">
    <property type="term" value="P:camera-type eye morphogenesis"/>
    <property type="evidence" value="ECO:0000250"/>
    <property type="project" value="UniProtKB"/>
</dbReference>
<dbReference type="GO" id="GO:0060271">
    <property type="term" value="P:cilium assembly"/>
    <property type="evidence" value="ECO:0000315"/>
    <property type="project" value="UniProtKB"/>
</dbReference>
<dbReference type="GO" id="GO:0010172">
    <property type="term" value="P:embryonic body morphogenesis"/>
    <property type="evidence" value="ECO:0000250"/>
    <property type="project" value="UniProtKB"/>
</dbReference>
<dbReference type="GO" id="GO:0035115">
    <property type="term" value="P:embryonic forelimb morphogenesis"/>
    <property type="evidence" value="ECO:0000250"/>
    <property type="project" value="BHF-UCL"/>
</dbReference>
<dbReference type="GO" id="GO:0035050">
    <property type="term" value="P:embryonic heart tube development"/>
    <property type="evidence" value="ECO:0000250"/>
    <property type="project" value="UniProtKB"/>
</dbReference>
<dbReference type="GO" id="GO:0060971">
    <property type="term" value="P:embryonic heart tube left/right pattern formation"/>
    <property type="evidence" value="ECO:0000250"/>
    <property type="project" value="BHF-UCL"/>
</dbReference>
<dbReference type="GO" id="GO:0072594">
    <property type="term" value="P:establishment of protein localization to organelle"/>
    <property type="evidence" value="ECO:0000250"/>
    <property type="project" value="BHF-UCL"/>
</dbReference>
<dbReference type="GO" id="GO:0035556">
    <property type="term" value="P:intracellular signal transduction"/>
    <property type="evidence" value="ECO:0000250"/>
    <property type="project" value="BHF-UCL"/>
</dbReference>
<dbReference type="GO" id="GO:0035720">
    <property type="term" value="P:intraciliary anterograde transport"/>
    <property type="evidence" value="ECO:0000250"/>
    <property type="project" value="BHF-UCL"/>
</dbReference>
<dbReference type="GO" id="GO:0035721">
    <property type="term" value="P:intraciliary retrograde transport"/>
    <property type="evidence" value="ECO:0000250"/>
    <property type="project" value="UniProtKB"/>
</dbReference>
<dbReference type="GO" id="GO:0042073">
    <property type="term" value="P:intraciliary transport"/>
    <property type="evidence" value="ECO:0000315"/>
    <property type="project" value="UniProtKB"/>
</dbReference>
<dbReference type="GO" id="GO:0060173">
    <property type="term" value="P:limb development"/>
    <property type="evidence" value="ECO:0000250"/>
    <property type="project" value="UniProtKB"/>
</dbReference>
<dbReference type="GO" id="GO:0045879">
    <property type="term" value="P:negative regulation of smoothened signaling pathway"/>
    <property type="evidence" value="ECO:0000250"/>
    <property type="project" value="UniProtKB"/>
</dbReference>
<dbReference type="GO" id="GO:0001843">
    <property type="term" value="P:neural tube closure"/>
    <property type="evidence" value="ECO:0000250"/>
    <property type="project" value="UniProtKB"/>
</dbReference>
<dbReference type="GO" id="GO:1905515">
    <property type="term" value="P:non-motile cilium assembly"/>
    <property type="evidence" value="ECO:0000318"/>
    <property type="project" value="GO_Central"/>
</dbReference>
<dbReference type="GO" id="GO:0061512">
    <property type="term" value="P:protein localization to cilium"/>
    <property type="evidence" value="ECO:0000315"/>
    <property type="project" value="UniProtKB"/>
</dbReference>
<dbReference type="GO" id="GO:0021513">
    <property type="term" value="P:spinal cord dorsal/ventral patterning"/>
    <property type="evidence" value="ECO:0000250"/>
    <property type="project" value="BHF-UCL"/>
</dbReference>
<dbReference type="FunFam" id="2.130.10.10:FF:001062">
    <property type="entry name" value="Intraflagellar transport 122"/>
    <property type="match status" value="1"/>
</dbReference>
<dbReference type="FunFam" id="1.25.40.470:FF:000005">
    <property type="entry name" value="Intraflagellar transport protein 122 homolog"/>
    <property type="match status" value="1"/>
</dbReference>
<dbReference type="FunFam" id="2.130.10.10:FF:000326">
    <property type="entry name" value="Intraflagellar transport protein 122 homolog"/>
    <property type="match status" value="1"/>
</dbReference>
<dbReference type="FunFam" id="1.25.40.470:FF:000003">
    <property type="entry name" value="intraflagellar transport protein 122 homolog"/>
    <property type="match status" value="1"/>
</dbReference>
<dbReference type="FunFam" id="2.130.10.10:FF:000721">
    <property type="entry name" value="intraflagellar transport protein 122 homolog"/>
    <property type="match status" value="1"/>
</dbReference>
<dbReference type="Gene3D" id="1.25.40.470">
    <property type="match status" value="2"/>
</dbReference>
<dbReference type="Gene3D" id="2.130.10.10">
    <property type="entry name" value="YVTN repeat-like/Quinoprotein amine dehydrogenase"/>
    <property type="match status" value="3"/>
</dbReference>
<dbReference type="InterPro" id="IPR056153">
    <property type="entry name" value="Beta-prop_IFT122_1st"/>
</dbReference>
<dbReference type="InterPro" id="IPR056152">
    <property type="entry name" value="Beta-prop_IFT122_2nd"/>
</dbReference>
<dbReference type="InterPro" id="IPR039857">
    <property type="entry name" value="Ift122/121"/>
</dbReference>
<dbReference type="InterPro" id="IPR015943">
    <property type="entry name" value="WD40/YVTN_repeat-like_dom_sf"/>
</dbReference>
<dbReference type="InterPro" id="IPR036322">
    <property type="entry name" value="WD40_repeat_dom_sf"/>
</dbReference>
<dbReference type="InterPro" id="IPR001680">
    <property type="entry name" value="WD40_rpt"/>
</dbReference>
<dbReference type="InterPro" id="IPR056838">
    <property type="entry name" value="Zn_ribbon_IFT122"/>
</dbReference>
<dbReference type="PANTHER" id="PTHR12764:SF4">
    <property type="entry name" value="INTRAFLAGELLAR TRANSPORT PROTEIN 122 HOMOLOG"/>
    <property type="match status" value="1"/>
</dbReference>
<dbReference type="PANTHER" id="PTHR12764">
    <property type="entry name" value="WD REPEAT DOMAIN-RELATED"/>
    <property type="match status" value="1"/>
</dbReference>
<dbReference type="Pfam" id="PF23381">
    <property type="entry name" value="Beta-prop_IFT122_1st"/>
    <property type="match status" value="1"/>
</dbReference>
<dbReference type="Pfam" id="PF23377">
    <property type="entry name" value="Beta-prop_IFT122_2nd"/>
    <property type="match status" value="1"/>
</dbReference>
<dbReference type="Pfam" id="PF25295">
    <property type="entry name" value="TPR_IFT122"/>
    <property type="match status" value="1"/>
</dbReference>
<dbReference type="Pfam" id="PF25144">
    <property type="entry name" value="Zn_ribbon_IFT122"/>
    <property type="match status" value="1"/>
</dbReference>
<dbReference type="Pfam" id="PF25143">
    <property type="entry name" value="Zn_ribbon_IFT122_C"/>
    <property type="match status" value="1"/>
</dbReference>
<dbReference type="SMART" id="SM00320">
    <property type="entry name" value="WD40"/>
    <property type="match status" value="7"/>
</dbReference>
<dbReference type="SUPFAM" id="SSF50978">
    <property type="entry name" value="WD40 repeat-like"/>
    <property type="match status" value="2"/>
</dbReference>
<dbReference type="PROSITE" id="PS50082">
    <property type="entry name" value="WD_REPEATS_2"/>
    <property type="match status" value="1"/>
</dbReference>
<dbReference type="PROSITE" id="PS50294">
    <property type="entry name" value="WD_REPEATS_REGION"/>
    <property type="match status" value="1"/>
</dbReference>
<feature type="chain" id="PRO_0000051045" description="Intraflagellar transport protein 122 homolog">
    <location>
        <begin position="1"/>
        <end position="1241"/>
    </location>
</feature>
<feature type="repeat" description="WD 1">
    <location>
        <begin position="10"/>
        <end position="50"/>
    </location>
</feature>
<feature type="repeat" description="WD 2">
    <location>
        <begin position="51"/>
        <end position="91"/>
    </location>
</feature>
<feature type="repeat" description="WD 3">
    <location>
        <begin position="93"/>
        <end position="129"/>
    </location>
</feature>
<feature type="repeat" description="WD 4">
    <location>
        <begin position="131"/>
        <end position="169"/>
    </location>
</feature>
<feature type="repeat" description="WD 5">
    <location>
        <begin position="278"/>
        <end position="317"/>
    </location>
</feature>
<feature type="repeat" description="WD 6">
    <location>
        <begin position="319"/>
        <end position="359"/>
    </location>
</feature>
<feature type="repeat" description="WD 7">
    <location>
        <begin position="512"/>
        <end position="551"/>
    </location>
</feature>
<feature type="region of interest" description="Disordered" evidence="2">
    <location>
        <begin position="222"/>
        <end position="246"/>
    </location>
</feature>
<feature type="compositionally biased region" description="Acidic residues" evidence="2">
    <location>
        <begin position="229"/>
        <end position="242"/>
    </location>
</feature>
<feature type="splice variant" id="VSP_056773" description="In isoform 7 and isoform 8." evidence="15">
    <location>
        <begin position="1"/>
        <end position="150"/>
    </location>
</feature>
<feature type="splice variant" id="VSP_043310" description="In isoform 4." evidence="14">
    <location>
        <begin position="65"/>
        <end position="116"/>
    </location>
</feature>
<feature type="splice variant" id="VSP_056774" description="In isoform 9." evidence="13">
    <original>GKRFASGSADKSVIIWTSKLEGILKYTHNDAIQCVSYNPITHQLASCSSSDF</original>
    <variation>VLCIE</variation>
    <location>
        <begin position="65"/>
        <end position="116"/>
    </location>
</feature>
<feature type="splice variant" id="VSP_056775" description="In isoform 10." evidence="13">
    <location>
        <begin position="66"/>
        <end position="117"/>
    </location>
</feature>
<feature type="splice variant" id="VSP_045224" description="In isoform 5 and isoform 6." evidence="12">
    <original>T</original>
    <variation>TSWSVMSSLHLHLPFLGLHKTVRVTATDKAPKGQGGRIDCLRPSVQNQPGQK</variation>
    <location>
        <position position="91"/>
    </location>
</feature>
<feature type="splice variant" id="VSP_056776" description="In isoform 10." evidence="13">
    <original>SWTNDGQYLALGMFNGIISIRNKNGEEKVKIERPGGSLSPIWSICWNPSSRWESFWMNRENEDAEDVIVNRYIQEIPSTLKSAVYSSQGSEAEEEEPEEEDDSPRDDNL</original>
    <variation>R</variation>
    <location>
        <begin position="139"/>
        <end position="247"/>
    </location>
</feature>
<feature type="splice variant" id="VSP_041161" description="In isoform 3, isoform 4, isoform 6, isoform 7, isoform 9 and isoform 11." evidence="13 14">
    <original>SRWESFWMNRENEDAEDVIVNRYIQEIPSTLKSAVYSSQGSEAEEEEPEEEDDSPRDDNL</original>
    <variation>R</variation>
    <location>
        <begin position="188"/>
        <end position="247"/>
    </location>
</feature>
<feature type="splice variant" id="VSP_056777" description="In isoform 9." evidence="13">
    <location>
        <begin position="665"/>
        <end position="682"/>
    </location>
</feature>
<feature type="splice variant" id="VSP_043311" description="In isoform 4, isoform 6, isoform 9 and isoform 10." evidence="13 14">
    <original>Q</original>
    <variation>QA</variation>
    <location>
        <position position="930"/>
    </location>
</feature>
<feature type="splice variant" id="VSP_056778" description="In isoform 11." evidence="13">
    <location>
        <begin position="1053"/>
        <end position="1241"/>
    </location>
</feature>
<feature type="sequence variant" id="VAR_063584" description="In CED1; perturbed ciliary protein trafficking; no effect on interaction with ITF43:WDR35; fail to assemble IFT-A complex at the cilia base; no effect on ciliogenesis; dbSNP:rs267607193." evidence="4 10">
    <original>W</original>
    <variation>C</variation>
    <location>
        <position position="7"/>
    </location>
</feature>
<feature type="sequence variant" id="VAR_063585" description="In CED1; no effect on interaction with ITF43:WDR35; dbSNP:rs267607192." evidence="4 10">
    <original>S</original>
    <variation>F</variation>
    <location>
        <position position="322"/>
    </location>
</feature>
<feature type="sequence variant" id="VAR_081601" description="In CED1; uncertain significance; dbSNP:rs777418707." evidence="8">
    <original>V</original>
    <variation>L</variation>
    <location>
        <position position="391"/>
    </location>
</feature>
<feature type="sequence variant" id="VAR_081602" description="In CED1; strongly decreases interaction with ITF43:WDR35; dbSNP:rs397515568." evidence="6 10">
    <original>G</original>
    <variation>R</variation>
    <location>
        <position position="495"/>
    </location>
</feature>
<feature type="sequence variant" id="VAR_063586" description="In CED1; strongly decreases interaction with ITF43:WDR35; dbSNP:rs267607191." evidence="4 10">
    <original>V</original>
    <variation>G</variation>
    <location>
        <position position="502"/>
    </location>
</feature>
<feature type="sequence variant" id="VAR_081603" description="In CED1; uncertain significance; dbSNP:rs2078919826." evidence="8">
    <original>F</original>
    <variation>C</variation>
    <location>
        <position position="570"/>
    </location>
</feature>
<feature type="sequence variant" id="VAR_081604" description="In CED1; decreased ciliogenesis; perturbed ciliary protein trafficking; strongly decreases interaction with ITF43:WDR35; fail to assemble IFT-A complex at the cilia base; dbSNP:rs786205566." evidence="7 10">
    <original>G</original>
    <variation>V</variation>
    <location>
        <position position="572"/>
    </location>
</feature>
<feature type="sequence variant" id="VAR_081605" description="In CED1; uncertain significance; dbSNP:rs1224050823." evidence="8">
    <original>L</original>
    <variation>P</variation>
    <location>
        <position position="712"/>
    </location>
</feature>
<feature type="sequence conflict" description="In Ref. 7; AAH28353." evidence="16" ref="7">
    <original>E</original>
    <variation>D</variation>
    <location>
        <position position="238"/>
    </location>
</feature>
<feature type="sequence conflict" description="In Ref. 1; AAG15427." evidence="16" ref="1">
    <original>I</original>
    <variation>T</variation>
    <location>
        <position position="273"/>
    </location>
</feature>
<feature type="sequence conflict" description="In Ref. 3; BAD96815." evidence="16" ref="3">
    <original>L</original>
    <variation>S</variation>
    <location>
        <position position="489"/>
    </location>
</feature>
<feature type="sequence conflict" description="In Ref. 1; AAG15428." evidence="16" ref="1">
    <original>R</original>
    <variation>Q</variation>
    <location>
        <position position="687"/>
    </location>
</feature>
<feature type="sequence conflict" description="In Ref. 4; BAG54015." evidence="16" ref="4">
    <original>S</original>
    <variation>P</variation>
    <location>
        <position position="773"/>
    </location>
</feature>
<feature type="sequence conflict" description="In Ref. 4; BAG54015." evidence="16" ref="4">
    <original>E</original>
    <variation>G</variation>
    <location>
        <position position="843"/>
    </location>
</feature>
<feature type="sequence conflict" description="In Ref. 1; AAG15428." evidence="16" ref="1">
    <original>A</original>
    <variation>V</variation>
    <location>
        <position position="907"/>
    </location>
</feature>
<feature type="sequence conflict" description="In Ref. 1; AAG15427 and 3; BAG60729." evidence="16" ref="1 3">
    <original>V</original>
    <variation>VR</variation>
    <location>
        <position position="996"/>
    </location>
</feature>
<feature type="sequence conflict" description="In Ref. 3; BAA91888 and 4; BAG54015." evidence="16" ref="3 4">
    <original>L</original>
    <variation>F</variation>
    <location>
        <position position="1182"/>
    </location>
</feature>
<feature type="strand" evidence="18">
    <location>
        <begin position="3"/>
        <end position="10"/>
    </location>
</feature>
<feature type="strand" evidence="18">
    <location>
        <begin position="15"/>
        <end position="20"/>
    </location>
</feature>
<feature type="strand" evidence="18">
    <location>
        <begin position="24"/>
        <end position="31"/>
    </location>
</feature>
<feature type="strand" evidence="18">
    <location>
        <begin position="34"/>
        <end position="39"/>
    </location>
</feature>
<feature type="turn" evidence="18">
    <location>
        <begin position="40"/>
        <end position="42"/>
    </location>
</feature>
<feature type="strand" evidence="18">
    <location>
        <begin position="45"/>
        <end position="49"/>
    </location>
</feature>
<feature type="strand" evidence="18">
    <location>
        <begin position="56"/>
        <end position="61"/>
    </location>
</feature>
<feature type="strand" evidence="18">
    <location>
        <begin position="65"/>
        <end position="72"/>
    </location>
</feature>
<feature type="strand" evidence="18">
    <location>
        <begin position="75"/>
        <end position="81"/>
    </location>
</feature>
<feature type="strand" evidence="18">
    <location>
        <begin position="88"/>
        <end position="91"/>
    </location>
</feature>
<feature type="strand" evidence="18">
    <location>
        <begin position="96"/>
        <end position="101"/>
    </location>
</feature>
<feature type="turn" evidence="18">
    <location>
        <begin position="103"/>
        <end position="105"/>
    </location>
</feature>
<feature type="strand" evidence="18">
    <location>
        <begin position="108"/>
        <end position="115"/>
    </location>
</feature>
<feature type="strand" evidence="18">
    <location>
        <begin position="135"/>
        <end position="140"/>
    </location>
</feature>
<feature type="strand" evidence="18">
    <location>
        <begin position="144"/>
        <end position="151"/>
    </location>
</feature>
<feature type="strand" evidence="18">
    <location>
        <begin position="154"/>
        <end position="160"/>
    </location>
</feature>
<feature type="strand" evidence="18">
    <location>
        <begin position="165"/>
        <end position="170"/>
    </location>
</feature>
<feature type="helix" evidence="18">
    <location>
        <begin position="174"/>
        <end position="176"/>
    </location>
</feature>
<feature type="strand" evidence="18">
    <location>
        <begin position="179"/>
        <end position="184"/>
    </location>
</feature>
<feature type="helix" evidence="18">
    <location>
        <begin position="189"/>
        <end position="192"/>
    </location>
</feature>
<feature type="helix" evidence="18">
    <location>
        <begin position="247"/>
        <end position="249"/>
    </location>
</feature>
<feature type="strand" evidence="18">
    <location>
        <begin position="253"/>
        <end position="258"/>
    </location>
</feature>
<feature type="turn" evidence="18">
    <location>
        <begin position="259"/>
        <end position="261"/>
    </location>
</feature>
<feature type="strand" evidence="18">
    <location>
        <begin position="262"/>
        <end position="267"/>
    </location>
</feature>
<feature type="strand" evidence="18">
    <location>
        <begin position="272"/>
        <end position="278"/>
    </location>
</feature>
<feature type="strand" evidence="18">
    <location>
        <begin position="283"/>
        <end position="288"/>
    </location>
</feature>
<feature type="strand" evidence="18">
    <location>
        <begin position="292"/>
        <end position="299"/>
    </location>
</feature>
<feature type="strand" evidence="18">
    <location>
        <begin position="302"/>
        <end position="308"/>
    </location>
</feature>
<feature type="strand" evidence="18">
    <location>
        <begin position="313"/>
        <end position="317"/>
    </location>
</feature>
<feature type="strand" evidence="18">
    <location>
        <begin position="324"/>
        <end position="329"/>
    </location>
</feature>
<feature type="strand" evidence="18">
    <location>
        <begin position="333"/>
        <end position="340"/>
    </location>
</feature>
<feature type="strand" evidence="18">
    <location>
        <begin position="343"/>
        <end position="350"/>
    </location>
</feature>
<feature type="turn" evidence="18">
    <location>
        <begin position="359"/>
        <end position="361"/>
    </location>
</feature>
<feature type="strand" evidence="18">
    <location>
        <begin position="362"/>
        <end position="367"/>
    </location>
</feature>
<feature type="turn" evidence="18">
    <location>
        <begin position="368"/>
        <end position="370"/>
    </location>
</feature>
<feature type="strand" evidence="18">
    <location>
        <begin position="371"/>
        <end position="376"/>
    </location>
</feature>
<feature type="turn" evidence="18">
    <location>
        <begin position="377"/>
        <end position="379"/>
    </location>
</feature>
<feature type="strand" evidence="18">
    <location>
        <begin position="382"/>
        <end position="386"/>
    </location>
</feature>
<feature type="strand" evidence="18">
    <location>
        <begin position="393"/>
        <end position="397"/>
    </location>
</feature>
<feature type="strand" evidence="18">
    <location>
        <begin position="400"/>
        <end position="404"/>
    </location>
</feature>
<feature type="strand" evidence="18">
    <location>
        <begin position="409"/>
        <end position="417"/>
    </location>
</feature>
<feature type="strand" evidence="18">
    <location>
        <begin position="424"/>
        <end position="430"/>
    </location>
</feature>
<feature type="strand" evidence="18">
    <location>
        <begin position="437"/>
        <end position="441"/>
    </location>
</feature>
<feature type="strand" evidence="18">
    <location>
        <begin position="443"/>
        <end position="450"/>
    </location>
</feature>
<feature type="strand" evidence="18">
    <location>
        <begin position="453"/>
        <end position="458"/>
    </location>
</feature>
<feature type="strand" evidence="18">
    <location>
        <begin position="463"/>
        <end position="468"/>
    </location>
</feature>
<feature type="strand" evidence="18">
    <location>
        <begin position="473"/>
        <end position="478"/>
    </location>
</feature>
<feature type="strand" evidence="18">
    <location>
        <begin position="487"/>
        <end position="492"/>
    </location>
</feature>
<feature type="strand" evidence="18">
    <location>
        <begin position="495"/>
        <end position="501"/>
    </location>
</feature>
<feature type="strand" evidence="18">
    <location>
        <begin position="505"/>
        <end position="512"/>
    </location>
</feature>
<feature type="strand" evidence="18">
    <location>
        <begin position="518"/>
        <end position="522"/>
    </location>
</feature>
<feature type="strand" evidence="18">
    <location>
        <begin position="526"/>
        <end position="532"/>
    </location>
</feature>
<feature type="strand" evidence="18">
    <location>
        <begin position="534"/>
        <end position="536"/>
    </location>
</feature>
<feature type="strand" evidence="18">
    <location>
        <begin position="538"/>
        <end position="542"/>
    </location>
</feature>
<feature type="turn" evidence="18">
    <location>
        <begin position="543"/>
        <end position="546"/>
    </location>
</feature>
<feature type="strand" evidence="18">
    <location>
        <begin position="547"/>
        <end position="553"/>
    </location>
</feature>
<feature type="strand" evidence="18">
    <location>
        <begin position="556"/>
        <end position="560"/>
    </location>
</feature>
<feature type="strand" evidence="18">
    <location>
        <begin position="562"/>
        <end position="564"/>
    </location>
</feature>
<feature type="strand" evidence="18">
    <location>
        <begin position="567"/>
        <end position="572"/>
    </location>
</feature>
<feature type="strand" evidence="18">
    <location>
        <begin position="575"/>
        <end position="580"/>
    </location>
</feature>
<feature type="strand" evidence="18">
    <location>
        <begin position="585"/>
        <end position="589"/>
    </location>
</feature>
<feature type="strand" evidence="18">
    <location>
        <begin position="592"/>
        <end position="598"/>
    </location>
</feature>
<feature type="strand" evidence="18">
    <location>
        <begin position="601"/>
        <end position="605"/>
    </location>
</feature>
<feature type="strand" evidence="18">
    <location>
        <begin position="607"/>
        <end position="610"/>
    </location>
</feature>
<feature type="helix" evidence="18">
    <location>
        <begin position="618"/>
        <end position="626"/>
    </location>
</feature>
<feature type="helix" evidence="18">
    <location>
        <begin position="630"/>
        <end position="637"/>
    </location>
</feature>
<feature type="helix" evidence="18">
    <location>
        <begin position="643"/>
        <end position="655"/>
    </location>
</feature>
<feature type="helix" evidence="18">
    <location>
        <begin position="659"/>
        <end position="669"/>
    </location>
</feature>
<feature type="helix" evidence="18">
    <location>
        <begin position="672"/>
        <end position="685"/>
    </location>
</feature>
<feature type="turn" evidence="18">
    <location>
        <begin position="686"/>
        <end position="688"/>
    </location>
</feature>
<feature type="helix" evidence="18">
    <location>
        <begin position="692"/>
        <end position="702"/>
    </location>
</feature>
<feature type="helix" evidence="18">
    <location>
        <begin position="706"/>
        <end position="715"/>
    </location>
</feature>
<feature type="helix" evidence="18">
    <location>
        <begin position="719"/>
        <end position="728"/>
    </location>
</feature>
<feature type="helix" evidence="18">
    <location>
        <begin position="732"/>
        <end position="735"/>
    </location>
</feature>
<feature type="helix" evidence="18">
    <location>
        <begin position="736"/>
        <end position="738"/>
    </location>
</feature>
<feature type="helix" evidence="19">
    <location>
        <begin position="744"/>
        <end position="760"/>
    </location>
</feature>
<feature type="helix" evidence="19">
    <location>
        <begin position="764"/>
        <end position="773"/>
    </location>
</feature>
<feature type="helix" evidence="19">
    <location>
        <begin position="777"/>
        <end position="787"/>
    </location>
</feature>
<feature type="helix" evidence="19">
    <location>
        <begin position="790"/>
        <end position="799"/>
    </location>
</feature>
<feature type="helix" evidence="19">
    <location>
        <begin position="805"/>
        <end position="817"/>
    </location>
</feature>
<feature type="helix" evidence="19">
    <location>
        <begin position="821"/>
        <end position="831"/>
    </location>
</feature>
<feature type="helix" evidence="19">
    <location>
        <begin position="834"/>
        <end position="843"/>
    </location>
</feature>
<feature type="helix" evidence="19">
    <location>
        <begin position="847"/>
        <end position="856"/>
    </location>
</feature>
<feature type="helix" evidence="19">
    <location>
        <begin position="858"/>
        <end position="860"/>
    </location>
</feature>
<feature type="helix" evidence="19">
    <location>
        <begin position="861"/>
        <end position="874"/>
    </location>
</feature>
<feature type="helix" evidence="19">
    <location>
        <begin position="878"/>
        <end position="887"/>
    </location>
</feature>
<feature type="helix" evidence="19">
    <location>
        <begin position="891"/>
        <end position="907"/>
    </location>
</feature>
<feature type="helix" evidence="19">
    <location>
        <begin position="911"/>
        <end position="928"/>
    </location>
</feature>
<feature type="helix" evidence="19">
    <location>
        <begin position="932"/>
        <end position="934"/>
    </location>
</feature>
<feature type="helix" evidence="19">
    <location>
        <begin position="935"/>
        <end position="963"/>
    </location>
</feature>
<feature type="strand" evidence="19">
    <location>
        <begin position="964"/>
        <end position="966"/>
    </location>
</feature>
<feature type="helix" evidence="19">
    <location>
        <begin position="971"/>
        <end position="984"/>
    </location>
</feature>
<feature type="helix" evidence="19">
    <location>
        <begin position="995"/>
        <end position="1009"/>
    </location>
</feature>
<feature type="helix" evidence="19">
    <location>
        <begin position="1012"/>
        <end position="1022"/>
    </location>
</feature>
<feature type="helix" evidence="19">
    <location>
        <begin position="1029"/>
        <end position="1043"/>
    </location>
</feature>
<feature type="strand" evidence="19">
    <location>
        <begin position="1047"/>
        <end position="1049"/>
    </location>
</feature>
<feature type="helix" evidence="19">
    <location>
        <begin position="1051"/>
        <end position="1053"/>
    </location>
</feature>
<feature type="turn" evidence="19">
    <location>
        <begin position="1058"/>
        <end position="1061"/>
    </location>
</feature>
<feature type="turn" evidence="19">
    <location>
        <begin position="1075"/>
        <end position="1077"/>
    </location>
</feature>
<feature type="turn" evidence="19">
    <location>
        <begin position="1085"/>
        <end position="1087"/>
    </location>
</feature>
<feature type="strand" evidence="19">
    <location>
        <begin position="1092"/>
        <end position="1098"/>
    </location>
</feature>
<feature type="helix" evidence="19">
    <location>
        <begin position="1104"/>
        <end position="1110"/>
    </location>
</feature>
<feature type="helix" evidence="19">
    <location>
        <begin position="1150"/>
        <end position="1156"/>
    </location>
</feature>
<feature type="strand" evidence="19">
    <location>
        <begin position="1166"/>
        <end position="1168"/>
    </location>
</feature>
<feature type="helix" evidence="19">
    <location>
        <begin position="1170"/>
        <end position="1175"/>
    </location>
</feature>
<feature type="turn" evidence="19">
    <location>
        <begin position="1178"/>
        <end position="1180"/>
    </location>
</feature>
<feature type="strand" evidence="19">
    <location>
        <begin position="1181"/>
        <end position="1184"/>
    </location>
</feature>
<feature type="strand" evidence="19">
    <location>
        <begin position="1193"/>
        <end position="1198"/>
    </location>
</feature>
<feature type="strand" evidence="19">
    <location>
        <begin position="1204"/>
        <end position="1206"/>
    </location>
</feature>
<feature type="turn" evidence="19">
    <location>
        <begin position="1208"/>
        <end position="1210"/>
    </location>
</feature>
<feature type="strand" evidence="19">
    <location>
        <begin position="1213"/>
        <end position="1215"/>
    </location>
</feature>
<feature type="helix" evidence="19">
    <location>
        <begin position="1216"/>
        <end position="1226"/>
    </location>
</feature>
<feature type="turn" evidence="19">
    <location>
        <begin position="1230"/>
        <end position="1232"/>
    </location>
</feature>
<organism>
    <name type="scientific">Homo sapiens</name>
    <name type="common">Human</name>
    <dbReference type="NCBI Taxonomy" id="9606"/>
    <lineage>
        <taxon>Eukaryota</taxon>
        <taxon>Metazoa</taxon>
        <taxon>Chordata</taxon>
        <taxon>Craniata</taxon>
        <taxon>Vertebrata</taxon>
        <taxon>Euteleostomi</taxon>
        <taxon>Mammalia</taxon>
        <taxon>Eutheria</taxon>
        <taxon>Euarchontoglires</taxon>
        <taxon>Primates</taxon>
        <taxon>Haplorrhini</taxon>
        <taxon>Catarrhini</taxon>
        <taxon>Hominidae</taxon>
        <taxon>Homo</taxon>
    </lineage>
</organism>
<sequence>MRAVLTWRDKAEHCINDIAFKPDGTQLILAAGSRLLVYDTSDGTLLQPLKGHKDTVYCVAYAKDGKRFASGSADKSVIIWTSKLEGILKYTHNDAIQCVSYNPITHQLASCSSSDFGLWSPEQKSVSKHKSSSKIICCSWTNDGQYLALGMFNGIISIRNKNGEEKVKIERPGGSLSPIWSICWNPSSRWESFWMNRENEDAEDVIVNRYIQEIPSTLKSAVYSSQGSEAEEEEPEEEDDSPRDDNLEERNDILAVADWGQKVSFYQLSGKQIGKDRALNFDPCCISYFTKGEYILLGGSDKQVSLFTKDGVRLGTVGEQNSWVWTCQAKPDSNYVVVGCQDGTISFYQLIFSTVHGLYKDRYAYRDSMTDVIVQHLITEQKVRIKCKELVKKIAIYRNRLAIQLPEKILIYELYSEDLSDMHYRVKEKIIKKFECNLLVVCANHIILCQEKRLQCLSFSGVKEREWQMESLIRYIKVIGGPPGREGLLVGLKNGQILKIFVDNLFAIVLLKQATAVRCLDMSASRKKLAVVDENDTCLVYDIDTKELLFQEPNANSVAWNTQCEDMLCFSGGGYLNIKASTFPVHRQKLQGFVVGYNGSKIFCLHVFSISAVEVPQSAPMYQYLDRKLFKEAYQIACLGVTDTDWRELAMEALEGLDFETAKKAFIRVQDLRYLELISSIEERKKRGETNNDLFLADVFSYQGKFHEAAKLYKRSGHENLALEMYTDLCMFEYAKDFLGSGDPKETKMLITKQADWARNIKEPKAAVEMYISAGEHVKAIEICGDHGWVDMLIDIARKLDKAEREPLLLCATYLKKLDSPGYAAETYLKMGDLKSLVQLHVETQRWDEAFALGEKHPEFKDDIYMPYAQWLAENDRFEEAQKAFHKAGRQREAVQVLEQLTNNAVAESRFNDAAYYYWMLSMQCLDIAQDPAQKDTMLGKFYHFQRLAELYHGYHAIHRHTEDPFSVHRPETLFNISRFLLHSLPKDTPSGISKVKILFTLAKQSKALGAYRLARHAYDKLRGLYIPARFQKSIELGTLTIRAKPFHDSEELVPLCYRCSTNNPLLNNLGNVCINCRQPFIFSASSYDVLHLVEFYLEEGITDEEAISLIDLEVLRPKRDDRQLEIANNSSQILRLVETKDSIGDEDPFTAKLSFEQGGSEFVPVVVSRLVLRSMSRRDVLIKRWPPPLRWQYFRSLLPDASITMCPSCFQMFHSEDYELLVLQHGCCPYCRRCKDDPGP</sequence>
<keyword id="KW-0002">3D-structure</keyword>
<keyword id="KW-0025">Alternative splicing</keyword>
<keyword id="KW-0966">Cell projection</keyword>
<keyword id="KW-1186">Ciliopathy</keyword>
<keyword id="KW-0969">Cilium</keyword>
<keyword id="KW-0970">Cilium biogenesis/degradation</keyword>
<keyword id="KW-0963">Cytoplasm</keyword>
<keyword id="KW-0206">Cytoskeleton</keyword>
<keyword id="KW-0217">Developmental protein</keyword>
<keyword id="KW-0225">Disease variant</keyword>
<keyword id="KW-0038">Ectodermal dysplasia</keyword>
<keyword id="KW-1267">Proteomics identification</keyword>
<keyword id="KW-1185">Reference proteome</keyword>
<keyword id="KW-0677">Repeat</keyword>
<keyword id="KW-0853">WD repeat</keyword>
<proteinExistence type="evidence at protein level"/>
<reference key="1">
    <citation type="journal article" date="2001" name="DNA Cell Biol.">
        <title>Cloning and characterization of human WDR10, a novel gene located at 3q21 encoding a WD-repeat protein that is highly expressed in pituitary and testis.</title>
        <authorList>
            <person name="Gross C."/>
            <person name="De Baere E."/>
            <person name="Lo A."/>
            <person name="Chang W."/>
            <person name="Messiaen L."/>
        </authorList>
    </citation>
    <scope>NUCLEOTIDE SEQUENCE [MRNA] (ISOFORM 5)</scope>
    <scope>TISSUE SPECIFICITY</scope>
</reference>
<reference key="2">
    <citation type="submission" date="2000-09" db="EMBL/GenBank/DDBJ databases">
        <title>The research of spermatogenesis related genes.</title>
        <authorList>
            <person name="Shan Y.X."/>
            <person name="Li J.M."/>
            <person name="Sha J.H."/>
        </authorList>
    </citation>
    <scope>NUCLEOTIDE SEQUENCE [MRNA] (ISOFORM 1)</scope>
</reference>
<reference key="3">
    <citation type="journal article" date="2004" name="Nat. Genet.">
        <title>Complete sequencing and characterization of 21,243 full-length human cDNAs.</title>
        <authorList>
            <person name="Ota T."/>
            <person name="Suzuki Y."/>
            <person name="Nishikawa T."/>
            <person name="Otsuki T."/>
            <person name="Sugiyama T."/>
            <person name="Irie R."/>
            <person name="Wakamatsu A."/>
            <person name="Hayashi K."/>
            <person name="Sato H."/>
            <person name="Nagai K."/>
            <person name="Kimura K."/>
            <person name="Makita H."/>
            <person name="Sekine M."/>
            <person name="Obayashi M."/>
            <person name="Nishi T."/>
            <person name="Shibahara T."/>
            <person name="Tanaka T."/>
            <person name="Ishii S."/>
            <person name="Yamamoto J."/>
            <person name="Saito K."/>
            <person name="Kawai Y."/>
            <person name="Isono Y."/>
            <person name="Nakamura Y."/>
            <person name="Nagahari K."/>
            <person name="Murakami K."/>
            <person name="Yasuda T."/>
            <person name="Iwayanagi T."/>
            <person name="Wagatsuma M."/>
            <person name="Shiratori A."/>
            <person name="Sudo H."/>
            <person name="Hosoiri T."/>
            <person name="Kaku Y."/>
            <person name="Kodaira H."/>
            <person name="Kondo H."/>
            <person name="Sugawara M."/>
            <person name="Takahashi M."/>
            <person name="Kanda K."/>
            <person name="Yokoi T."/>
            <person name="Furuya T."/>
            <person name="Kikkawa E."/>
            <person name="Omura Y."/>
            <person name="Abe K."/>
            <person name="Kamihara K."/>
            <person name="Katsuta N."/>
            <person name="Sato K."/>
            <person name="Tanikawa M."/>
            <person name="Yamazaki M."/>
            <person name="Ninomiya K."/>
            <person name="Ishibashi T."/>
            <person name="Yamashita H."/>
            <person name="Murakawa K."/>
            <person name="Fujimori K."/>
            <person name="Tanai H."/>
            <person name="Kimata M."/>
            <person name="Watanabe M."/>
            <person name="Hiraoka S."/>
            <person name="Chiba Y."/>
            <person name="Ishida S."/>
            <person name="Ono Y."/>
            <person name="Takiguchi S."/>
            <person name="Watanabe S."/>
            <person name="Yosida M."/>
            <person name="Hotuta T."/>
            <person name="Kusano J."/>
            <person name="Kanehori K."/>
            <person name="Takahashi-Fujii A."/>
            <person name="Hara H."/>
            <person name="Tanase T.-O."/>
            <person name="Nomura Y."/>
            <person name="Togiya S."/>
            <person name="Komai F."/>
            <person name="Hara R."/>
            <person name="Takeuchi K."/>
            <person name="Arita M."/>
            <person name="Imose N."/>
            <person name="Musashino K."/>
            <person name="Yuuki H."/>
            <person name="Oshima A."/>
            <person name="Sasaki N."/>
            <person name="Aotsuka S."/>
            <person name="Yoshikawa Y."/>
            <person name="Matsunawa H."/>
            <person name="Ichihara T."/>
            <person name="Shiohata N."/>
            <person name="Sano S."/>
            <person name="Moriya S."/>
            <person name="Momiyama H."/>
            <person name="Satoh N."/>
            <person name="Takami S."/>
            <person name="Terashima Y."/>
            <person name="Suzuki O."/>
            <person name="Nakagawa S."/>
            <person name="Senoh A."/>
            <person name="Mizoguchi H."/>
            <person name="Goto Y."/>
            <person name="Shimizu F."/>
            <person name="Wakebe H."/>
            <person name="Hishigaki H."/>
            <person name="Watanabe T."/>
            <person name="Sugiyama A."/>
            <person name="Takemoto M."/>
            <person name="Kawakami B."/>
            <person name="Yamazaki M."/>
            <person name="Watanabe K."/>
            <person name="Kumagai A."/>
            <person name="Itakura S."/>
            <person name="Fukuzumi Y."/>
            <person name="Fujimori Y."/>
            <person name="Komiyama M."/>
            <person name="Tashiro H."/>
            <person name="Tanigami A."/>
            <person name="Fujiwara T."/>
            <person name="Ono T."/>
            <person name="Yamada K."/>
            <person name="Fujii Y."/>
            <person name="Ozaki K."/>
            <person name="Hirao M."/>
            <person name="Ohmori Y."/>
            <person name="Kawabata A."/>
            <person name="Hikiji T."/>
            <person name="Kobatake N."/>
            <person name="Inagaki H."/>
            <person name="Ikema Y."/>
            <person name="Okamoto S."/>
            <person name="Okitani R."/>
            <person name="Kawakami T."/>
            <person name="Noguchi S."/>
            <person name="Itoh T."/>
            <person name="Shigeta K."/>
            <person name="Senba T."/>
            <person name="Matsumura K."/>
            <person name="Nakajima Y."/>
            <person name="Mizuno T."/>
            <person name="Morinaga M."/>
            <person name="Sasaki M."/>
            <person name="Togashi T."/>
            <person name="Oyama M."/>
            <person name="Hata H."/>
            <person name="Watanabe M."/>
            <person name="Komatsu T."/>
            <person name="Mizushima-Sugano J."/>
            <person name="Satoh T."/>
            <person name="Shirai Y."/>
            <person name="Takahashi Y."/>
            <person name="Nakagawa K."/>
            <person name="Okumura K."/>
            <person name="Nagase T."/>
            <person name="Nomura N."/>
            <person name="Kikuchi H."/>
            <person name="Masuho Y."/>
            <person name="Yamashita R."/>
            <person name="Nakai K."/>
            <person name="Yada T."/>
            <person name="Nakamura Y."/>
            <person name="Ohara O."/>
            <person name="Isogai T."/>
            <person name="Sugano S."/>
        </authorList>
    </citation>
    <scope>NUCLEOTIDE SEQUENCE [LARGE SCALE MRNA] (ISOFORMS 3; 9; 10 AND 11)</scope>
    <source>
        <tissue>Cerebellum</tissue>
    </source>
</reference>
<reference key="4">
    <citation type="journal article" date="2007" name="BMC Genomics">
        <title>The full-ORF clone resource of the German cDNA consortium.</title>
        <authorList>
            <person name="Bechtel S."/>
            <person name="Rosenfelder H."/>
            <person name="Duda A."/>
            <person name="Schmidt C.P."/>
            <person name="Ernst U."/>
            <person name="Wellenreuther R."/>
            <person name="Mehrle A."/>
            <person name="Schuster C."/>
            <person name="Bahr A."/>
            <person name="Bloecker H."/>
            <person name="Heubner D."/>
            <person name="Hoerlein A."/>
            <person name="Michel G."/>
            <person name="Wedler H."/>
            <person name="Koehrer K."/>
            <person name="Ottenwaelder B."/>
            <person name="Poustka A."/>
            <person name="Wiemann S."/>
            <person name="Schupp I."/>
        </authorList>
    </citation>
    <scope>NUCLEOTIDE SEQUENCE [LARGE SCALE MRNA] (ISOFORM 8)</scope>
    <source>
        <tissue>Testis</tissue>
    </source>
</reference>
<reference key="5">
    <citation type="journal article" date="2006" name="Nature">
        <title>The DNA sequence, annotation and analysis of human chromosome 3.</title>
        <authorList>
            <person name="Muzny D.M."/>
            <person name="Scherer S.E."/>
            <person name="Kaul R."/>
            <person name="Wang J."/>
            <person name="Yu J."/>
            <person name="Sudbrak R."/>
            <person name="Buhay C.J."/>
            <person name="Chen R."/>
            <person name="Cree A."/>
            <person name="Ding Y."/>
            <person name="Dugan-Rocha S."/>
            <person name="Gill R."/>
            <person name="Gunaratne P."/>
            <person name="Harris R.A."/>
            <person name="Hawes A.C."/>
            <person name="Hernandez J."/>
            <person name="Hodgson A.V."/>
            <person name="Hume J."/>
            <person name="Jackson A."/>
            <person name="Khan Z.M."/>
            <person name="Kovar-Smith C."/>
            <person name="Lewis L.R."/>
            <person name="Lozado R.J."/>
            <person name="Metzker M.L."/>
            <person name="Milosavljevic A."/>
            <person name="Miner G.R."/>
            <person name="Morgan M.B."/>
            <person name="Nazareth L.V."/>
            <person name="Scott G."/>
            <person name="Sodergren E."/>
            <person name="Song X.-Z."/>
            <person name="Steffen D."/>
            <person name="Wei S."/>
            <person name="Wheeler D.A."/>
            <person name="Wright M.W."/>
            <person name="Worley K.C."/>
            <person name="Yuan Y."/>
            <person name="Zhang Z."/>
            <person name="Adams C.Q."/>
            <person name="Ansari-Lari M.A."/>
            <person name="Ayele M."/>
            <person name="Brown M.J."/>
            <person name="Chen G."/>
            <person name="Chen Z."/>
            <person name="Clendenning J."/>
            <person name="Clerc-Blankenburg K.P."/>
            <person name="Chen R."/>
            <person name="Chen Z."/>
            <person name="Davis C."/>
            <person name="Delgado O."/>
            <person name="Dinh H.H."/>
            <person name="Dong W."/>
            <person name="Draper H."/>
            <person name="Ernst S."/>
            <person name="Fu G."/>
            <person name="Gonzalez-Garay M.L."/>
            <person name="Garcia D.K."/>
            <person name="Gillett W."/>
            <person name="Gu J."/>
            <person name="Hao B."/>
            <person name="Haugen E."/>
            <person name="Havlak P."/>
            <person name="He X."/>
            <person name="Hennig S."/>
            <person name="Hu S."/>
            <person name="Huang W."/>
            <person name="Jackson L.R."/>
            <person name="Jacob L.S."/>
            <person name="Kelly S.H."/>
            <person name="Kube M."/>
            <person name="Levy R."/>
            <person name="Li Z."/>
            <person name="Liu B."/>
            <person name="Liu J."/>
            <person name="Liu W."/>
            <person name="Lu J."/>
            <person name="Maheshwari M."/>
            <person name="Nguyen B.-V."/>
            <person name="Okwuonu G.O."/>
            <person name="Palmeiri A."/>
            <person name="Pasternak S."/>
            <person name="Perez L.M."/>
            <person name="Phelps K.A."/>
            <person name="Plopper F.J."/>
            <person name="Qiang B."/>
            <person name="Raymond C."/>
            <person name="Rodriguez R."/>
            <person name="Saenphimmachak C."/>
            <person name="Santibanez J."/>
            <person name="Shen H."/>
            <person name="Shen Y."/>
            <person name="Subramanian S."/>
            <person name="Tabor P.E."/>
            <person name="Verduzco D."/>
            <person name="Waldron L."/>
            <person name="Wang J."/>
            <person name="Wang J."/>
            <person name="Wang Q."/>
            <person name="Williams G.A."/>
            <person name="Wong G.K.-S."/>
            <person name="Yao Z."/>
            <person name="Zhang J."/>
            <person name="Zhang X."/>
            <person name="Zhao G."/>
            <person name="Zhou J."/>
            <person name="Zhou Y."/>
            <person name="Nelson D."/>
            <person name="Lehrach H."/>
            <person name="Reinhardt R."/>
            <person name="Naylor S.L."/>
            <person name="Yang H."/>
            <person name="Olson M."/>
            <person name="Weinstock G."/>
            <person name="Gibbs R.A."/>
        </authorList>
    </citation>
    <scope>NUCLEOTIDE SEQUENCE [LARGE SCALE GENOMIC DNA]</scope>
</reference>
<reference key="6">
    <citation type="submission" date="2005-09" db="EMBL/GenBank/DDBJ databases">
        <authorList>
            <person name="Mural R.J."/>
            <person name="Istrail S."/>
            <person name="Sutton G.G."/>
            <person name="Florea L."/>
            <person name="Halpern A.L."/>
            <person name="Mobarry C.M."/>
            <person name="Lippert R."/>
            <person name="Walenz B."/>
            <person name="Shatkay H."/>
            <person name="Dew I."/>
            <person name="Miller J.R."/>
            <person name="Flanigan M.J."/>
            <person name="Edwards N.J."/>
            <person name="Bolanos R."/>
            <person name="Fasulo D."/>
            <person name="Halldorsson B.V."/>
            <person name="Hannenhalli S."/>
            <person name="Turner R."/>
            <person name="Yooseph S."/>
            <person name="Lu F."/>
            <person name="Nusskern D.R."/>
            <person name="Shue B.C."/>
            <person name="Zheng X.H."/>
            <person name="Zhong F."/>
            <person name="Delcher A.L."/>
            <person name="Huson D.H."/>
            <person name="Kravitz S.A."/>
            <person name="Mouchard L."/>
            <person name="Reinert K."/>
            <person name="Remington K.A."/>
            <person name="Clark A.G."/>
            <person name="Waterman M.S."/>
            <person name="Eichler E.E."/>
            <person name="Adams M.D."/>
            <person name="Hunkapiller M.W."/>
            <person name="Myers E.W."/>
            <person name="Venter J.C."/>
        </authorList>
    </citation>
    <scope>NUCLEOTIDE SEQUENCE [LARGE SCALE GENOMIC DNA]</scope>
</reference>
<reference key="7">
    <citation type="journal article" date="2004" name="Genome Res.">
        <title>The status, quality, and expansion of the NIH full-length cDNA project: the Mammalian Gene Collection (MGC).</title>
        <authorList>
            <consortium name="The MGC Project Team"/>
        </authorList>
    </citation>
    <scope>NUCLEOTIDE SEQUENCE [LARGE SCALE MRNA] (ISOFORM 4)</scope>
    <source>
        <tissue>Lung</tissue>
        <tissue>Testis</tissue>
    </source>
</reference>
<reference key="8">
    <citation type="journal article" date="2010" name="Genes Dev.">
        <title>TULP3 bridges the IFT-A complex and membrane phosphoinositides to promote trafficking of G protein-coupled receptors into primary cilia.</title>
        <authorList>
            <person name="Mukhopadhyay S."/>
            <person name="Wen X."/>
            <person name="Chih B."/>
            <person name="Nelson C.D."/>
            <person name="Lane W.S."/>
            <person name="Scales S.J."/>
            <person name="Jackson P.K."/>
        </authorList>
    </citation>
    <scope>IDENTIFICATION IN THE IFT-A COMPLEX</scope>
</reference>
<reference key="9">
    <citation type="journal article" date="2017" name="Mol. Biol. Cell">
        <title>Intraflagellar transport-A complex mediates ciliary entry and retrograde trafficking of ciliary G protein-coupled receptors.</title>
        <authorList>
            <person name="Hirano T."/>
            <person name="Katoh Y."/>
            <person name="Nakayama K."/>
        </authorList>
    </citation>
    <scope>IDENTIFICATION IN THE IFT-A COMPLEX</scope>
    <scope>FUNCTION</scope>
</reference>
<reference key="10">
    <citation type="journal article" date="2019" name="J. Biochem.">
        <title>C11ORF74 interacts with the IFT-A complex and participates in ciliary BBSome localization.</title>
        <authorList>
            <person name="Takahara M."/>
            <person name="Kunii M."/>
            <person name="Nakamura K."/>
            <person name="Harada A."/>
            <person name="Hirano T."/>
            <person name="Katoh Y."/>
            <person name="Nakayama K."/>
        </authorList>
    </citation>
    <scope>INTERACTION WITH IFTAP</scope>
</reference>
<reference key="11">
    <citation type="journal article" date="2010" name="Am. J. Hum. Genet.">
        <title>Cranioectodermal dysplasia, Sensenbrenner syndrome, is a ciliopathy caused by mutations in the IFT122 gene.</title>
        <authorList>
            <person name="Walczak-Sztulpa J."/>
            <person name="Eggenschwiler J."/>
            <person name="Osborn D."/>
            <person name="Brown D.A."/>
            <person name="Emma F."/>
            <person name="Klingenberg C."/>
            <person name="Hennekam R.C."/>
            <person name="Torre G."/>
            <person name="Garshasbi M."/>
            <person name="Tzschach A."/>
            <person name="Szczepanska M."/>
            <person name="Krawczynski M."/>
            <person name="Zachwieja J."/>
            <person name="Zwolinska D."/>
            <person name="Beales P.L."/>
            <person name="Ropers H.H."/>
            <person name="Latos-Bielenska A."/>
            <person name="Kuss A.W."/>
        </authorList>
    </citation>
    <scope>VARIANTS CED1 CYS-7; PHE-322 AND GLY-502</scope>
</reference>
<reference key="12">
    <citation type="journal article" date="2014" name="Clin. Genet.">
        <title>Whole exome sequencing revealed biallelic IFT122 mutations in a family with CED1 and recurrent pregnancy loss.</title>
        <authorList>
            <person name="Tsurusaki Y."/>
            <person name="Yonezawa R."/>
            <person name="Furuya M."/>
            <person name="Nishimura G."/>
            <person name="Pooh R.K."/>
            <person name="Nakashima M."/>
            <person name="Saitsu H."/>
            <person name="Miyake N."/>
            <person name="Saito S."/>
            <person name="Matsumoto N."/>
        </authorList>
    </citation>
    <scope>VARIANT CED1 ARG-495</scope>
</reference>
<reference key="13">
    <citation type="journal article" date="2014" name="Mol. Genet. Genomic Med.">
        <title>Novel IFT122 mutation associated with impaired ciliogenesis and cranioectodermal dysplasia.</title>
        <authorList>
            <person name="Alazami A.M."/>
            <person name="Seidahmed M.Z."/>
            <person name="Alzahrani F."/>
            <person name="Mohammed A.O."/>
            <person name="Alkuraya F.S."/>
        </authorList>
    </citation>
    <scope>VARIANT CED1 VAL-572</scope>
    <scope>CHARACTERIZATION OF VARIANT CED1 VAL-572</scope>
</reference>
<reference key="14">
    <citation type="journal article" date="2016" name="Am. J. Med. Genet. A">
        <title>Novel IFT122 mutations in three Argentinian patients with cranioectodermal dysplasia: Expanding the mutational spectrum.</title>
        <authorList>
            <person name="Moosa S."/>
            <person name="Obregon M.G."/>
            <person name="Altmueller J."/>
            <person name="Thiele H."/>
            <person name="Nuernberg P."/>
            <person name="Fano V."/>
            <person name="Wollnik B."/>
        </authorList>
    </citation>
    <scope>VARIANTS CED1 LEU-391; CYS-570 AND PRO-712</scope>
</reference>
<reference key="15">
    <citation type="journal article" date="2018" name="Hum. Mol. Genet.">
        <title>Ciliopathy-associated mutations of IFT122 impair ciliary protein trafficking but not ciliogenesis.</title>
        <authorList>
            <person name="Takahara M."/>
            <person name="Katoh Y."/>
            <person name="Nakamura K."/>
            <person name="Hirano T."/>
            <person name="Sugawa M."/>
            <person name="Tsurumi Y."/>
            <person name="Nakayama K."/>
        </authorList>
    </citation>
    <scope>FUNCTION</scope>
    <scope>IDENTIFICATION IN THE IFT-A COMPLEX</scope>
    <scope>DOMAIN</scope>
    <scope>CHARACTERIZATION OF VARIANTS CED1 CYS-7; PHE-322; ARG-495; GLY-502 AND VAL-572</scope>
    <scope>SUBCELLULAR LOCATION</scope>
</reference>
<evidence type="ECO:0000250" key="1">
    <source>
        <dbReference type="UniProtKB" id="Q6NWV3"/>
    </source>
</evidence>
<evidence type="ECO:0000256" key="2">
    <source>
        <dbReference type="SAM" id="MobiDB-lite"/>
    </source>
</evidence>
<evidence type="ECO:0000269" key="3">
    <source>
    </source>
</evidence>
<evidence type="ECO:0000269" key="4">
    <source>
    </source>
</evidence>
<evidence type="ECO:0000269" key="5">
    <source>
    </source>
</evidence>
<evidence type="ECO:0000269" key="6">
    <source>
    </source>
</evidence>
<evidence type="ECO:0000269" key="7">
    <source>
    </source>
</evidence>
<evidence type="ECO:0000269" key="8">
    <source>
    </source>
</evidence>
<evidence type="ECO:0000269" key="9">
    <source>
    </source>
</evidence>
<evidence type="ECO:0000269" key="10">
    <source>
    </source>
</evidence>
<evidence type="ECO:0000269" key="11">
    <source>
    </source>
</evidence>
<evidence type="ECO:0000303" key="12">
    <source>
    </source>
</evidence>
<evidence type="ECO:0000303" key="13">
    <source>
    </source>
</evidence>
<evidence type="ECO:0000303" key="14">
    <source>
    </source>
</evidence>
<evidence type="ECO:0000303" key="15">
    <source>
    </source>
</evidence>
<evidence type="ECO:0000305" key="16"/>
<evidence type="ECO:0000312" key="17">
    <source>
        <dbReference type="HGNC" id="HGNC:13556"/>
    </source>
</evidence>
<evidence type="ECO:0007829" key="18">
    <source>
        <dbReference type="PDB" id="8BBE"/>
    </source>
</evidence>
<evidence type="ECO:0007829" key="19">
    <source>
        <dbReference type="PDB" id="8BBG"/>
    </source>
</evidence>
<gene>
    <name evidence="17" type="primary">IFT122</name>
    <name type="synonym">SPG</name>
    <name type="synonym">WDR10</name>
    <name type="synonym">WDR140</name>
</gene>
<protein>
    <recommendedName>
        <fullName evidence="16">Intraflagellar transport protein 122 homolog</fullName>
    </recommendedName>
    <alternativeName>
        <fullName>WD repeat-containing protein 10</fullName>
    </alternativeName>
    <alternativeName>
        <fullName>WD repeat-containing protein 140</fullName>
    </alternativeName>
</protein>